<evidence type="ECO:0000305" key="1"/>
<dbReference type="EMBL" id="AC068655">
    <property type="status" value="NOT_ANNOTATED_CDS"/>
    <property type="molecule type" value="Genomic_DNA"/>
</dbReference>
<dbReference type="EMBL" id="CP002688">
    <property type="protein sequence ID" value="AED92632.1"/>
    <property type="molecule type" value="Genomic_DNA"/>
</dbReference>
<dbReference type="EMBL" id="AK117517">
    <property type="protein sequence ID" value="BAC42180.1"/>
    <property type="status" value="ALT_INIT"/>
    <property type="molecule type" value="mRNA"/>
</dbReference>
<dbReference type="RefSeq" id="NP_197396.1">
    <property type="nucleotide sequence ID" value="NM_121900.3"/>
</dbReference>
<dbReference type="SMR" id="Q8GYM2"/>
<dbReference type="FunCoup" id="Q8GYM2">
    <property type="interactions" value="123"/>
</dbReference>
<dbReference type="iPTMnet" id="Q8GYM2"/>
<dbReference type="PaxDb" id="3702-AT5G18950.1"/>
<dbReference type="ProteomicsDB" id="249274"/>
<dbReference type="EnsemblPlants" id="AT5G18950.1">
    <property type="protein sequence ID" value="AT5G18950.1"/>
    <property type="gene ID" value="AT5G18950"/>
</dbReference>
<dbReference type="GeneID" id="832013"/>
<dbReference type="Gramene" id="AT5G18950.1">
    <property type="protein sequence ID" value="AT5G18950.1"/>
    <property type="gene ID" value="AT5G18950"/>
</dbReference>
<dbReference type="KEGG" id="ath:AT5G18950"/>
<dbReference type="Araport" id="AT5G18950"/>
<dbReference type="TAIR" id="AT5G18950"/>
<dbReference type="eggNOG" id="KOG4197">
    <property type="taxonomic scope" value="Eukaryota"/>
</dbReference>
<dbReference type="HOGENOM" id="CLU_002706_49_0_1"/>
<dbReference type="InParanoid" id="Q8GYM2"/>
<dbReference type="OMA" id="EAYCIFK"/>
<dbReference type="PhylomeDB" id="Q8GYM2"/>
<dbReference type="PRO" id="PR:Q8GYM2"/>
<dbReference type="Proteomes" id="UP000006548">
    <property type="component" value="Chromosome 5"/>
</dbReference>
<dbReference type="ExpressionAtlas" id="Q8GYM2">
    <property type="expression patterns" value="baseline and differential"/>
</dbReference>
<dbReference type="Gene3D" id="1.25.40.10">
    <property type="entry name" value="Tetratricopeptide repeat domain"/>
    <property type="match status" value="4"/>
</dbReference>
<dbReference type="InterPro" id="IPR002885">
    <property type="entry name" value="Pentatricopeptide_rpt"/>
</dbReference>
<dbReference type="InterPro" id="IPR050872">
    <property type="entry name" value="PPR_P_subfamily"/>
</dbReference>
<dbReference type="InterPro" id="IPR011990">
    <property type="entry name" value="TPR-like_helical_dom_sf"/>
</dbReference>
<dbReference type="NCBIfam" id="TIGR00756">
    <property type="entry name" value="PPR"/>
    <property type="match status" value="5"/>
</dbReference>
<dbReference type="PANTHER" id="PTHR46128">
    <property type="entry name" value="MITOCHONDRIAL GROUP I INTRON SPLICING FACTOR CCM1"/>
    <property type="match status" value="1"/>
</dbReference>
<dbReference type="PANTHER" id="PTHR46128:SF124">
    <property type="entry name" value="PENTACOTRIPEPTIDE-REPEAT REGION OF PRORP DOMAIN-CONTAINING PROTEIN"/>
    <property type="match status" value="1"/>
</dbReference>
<dbReference type="Pfam" id="PF01535">
    <property type="entry name" value="PPR"/>
    <property type="match status" value="3"/>
</dbReference>
<dbReference type="Pfam" id="PF13041">
    <property type="entry name" value="PPR_2"/>
    <property type="match status" value="2"/>
</dbReference>
<dbReference type="SUPFAM" id="SSF81901">
    <property type="entry name" value="HCP-like"/>
    <property type="match status" value="1"/>
</dbReference>
<dbReference type="PROSITE" id="PS51375">
    <property type="entry name" value="PPR"/>
    <property type="match status" value="9"/>
</dbReference>
<proteinExistence type="evidence at transcript level"/>
<keyword id="KW-1185">Reference proteome</keyword>
<keyword id="KW-0677">Repeat</keyword>
<accession>Q8GYM2</accession>
<gene>
    <name type="ordered locus">At5g18950</name>
    <name type="ORF">F17K4_200</name>
</gene>
<name>PP393_ARATH</name>
<feature type="chain" id="PRO_0000363530" description="Pentatricopeptide repeat-containing protein At5g18950">
    <location>
        <begin position="1"/>
        <end position="483"/>
    </location>
</feature>
<feature type="repeat" description="PPR 1">
    <location>
        <begin position="144"/>
        <end position="178"/>
    </location>
</feature>
<feature type="repeat" description="PPR 2">
    <location>
        <begin position="179"/>
        <end position="213"/>
    </location>
</feature>
<feature type="repeat" description="PPR 3">
    <location>
        <begin position="218"/>
        <end position="246"/>
    </location>
</feature>
<feature type="repeat" description="PPR 4">
    <location>
        <begin position="247"/>
        <end position="281"/>
    </location>
</feature>
<feature type="repeat" description="PPR 5">
    <location>
        <begin position="282"/>
        <end position="316"/>
    </location>
</feature>
<feature type="repeat" description="PPR 6">
    <location>
        <begin position="317"/>
        <end position="351"/>
    </location>
</feature>
<feature type="repeat" description="PPR 7">
    <location>
        <begin position="352"/>
        <end position="386"/>
    </location>
</feature>
<feature type="repeat" description="PPR 8">
    <location>
        <begin position="387"/>
        <end position="421"/>
    </location>
</feature>
<feature type="repeat" description="PPR 9">
    <location>
        <begin position="422"/>
        <end position="456"/>
    </location>
</feature>
<feature type="sequence conflict" description="In Ref. 3; BAC42180." evidence="1" ref="3">
    <original>N</original>
    <variation>I</variation>
    <location>
        <position position="263"/>
    </location>
</feature>
<feature type="sequence conflict" description="In Ref. 3; BAC42180." evidence="1" ref="3">
    <original>M</original>
    <variation>I</variation>
    <location>
        <position position="359"/>
    </location>
</feature>
<reference key="1">
    <citation type="journal article" date="2000" name="Nature">
        <title>Sequence and analysis of chromosome 5 of the plant Arabidopsis thaliana.</title>
        <authorList>
            <person name="Tabata S."/>
            <person name="Kaneko T."/>
            <person name="Nakamura Y."/>
            <person name="Kotani H."/>
            <person name="Kato T."/>
            <person name="Asamizu E."/>
            <person name="Miyajima N."/>
            <person name="Sasamoto S."/>
            <person name="Kimura T."/>
            <person name="Hosouchi T."/>
            <person name="Kawashima K."/>
            <person name="Kohara M."/>
            <person name="Matsumoto M."/>
            <person name="Matsuno A."/>
            <person name="Muraki A."/>
            <person name="Nakayama S."/>
            <person name="Nakazaki N."/>
            <person name="Naruo K."/>
            <person name="Okumura S."/>
            <person name="Shinpo S."/>
            <person name="Takeuchi C."/>
            <person name="Wada T."/>
            <person name="Watanabe A."/>
            <person name="Yamada M."/>
            <person name="Yasuda M."/>
            <person name="Sato S."/>
            <person name="de la Bastide M."/>
            <person name="Huang E."/>
            <person name="Spiegel L."/>
            <person name="Gnoj L."/>
            <person name="O'Shaughnessy A."/>
            <person name="Preston R."/>
            <person name="Habermann K."/>
            <person name="Murray J."/>
            <person name="Johnson D."/>
            <person name="Rohlfing T."/>
            <person name="Nelson J."/>
            <person name="Stoneking T."/>
            <person name="Pepin K."/>
            <person name="Spieth J."/>
            <person name="Sekhon M."/>
            <person name="Armstrong J."/>
            <person name="Becker M."/>
            <person name="Belter E."/>
            <person name="Cordum H."/>
            <person name="Cordes M."/>
            <person name="Courtney L."/>
            <person name="Courtney W."/>
            <person name="Dante M."/>
            <person name="Du H."/>
            <person name="Edwards J."/>
            <person name="Fryman J."/>
            <person name="Haakensen B."/>
            <person name="Lamar E."/>
            <person name="Latreille P."/>
            <person name="Leonard S."/>
            <person name="Meyer R."/>
            <person name="Mulvaney E."/>
            <person name="Ozersky P."/>
            <person name="Riley A."/>
            <person name="Strowmatt C."/>
            <person name="Wagner-McPherson C."/>
            <person name="Wollam A."/>
            <person name="Yoakum M."/>
            <person name="Bell M."/>
            <person name="Dedhia N."/>
            <person name="Parnell L."/>
            <person name="Shah R."/>
            <person name="Rodriguez M."/>
            <person name="Hoon See L."/>
            <person name="Vil D."/>
            <person name="Baker J."/>
            <person name="Kirchoff K."/>
            <person name="Toth K."/>
            <person name="King L."/>
            <person name="Bahret A."/>
            <person name="Miller B."/>
            <person name="Marra M.A."/>
            <person name="Martienssen R."/>
            <person name="McCombie W.R."/>
            <person name="Wilson R.K."/>
            <person name="Murphy G."/>
            <person name="Bancroft I."/>
            <person name="Volckaert G."/>
            <person name="Wambutt R."/>
            <person name="Duesterhoeft A."/>
            <person name="Stiekema W."/>
            <person name="Pohl T."/>
            <person name="Entian K.-D."/>
            <person name="Terryn N."/>
            <person name="Hartley N."/>
            <person name="Bent E."/>
            <person name="Johnson S."/>
            <person name="Langham S.-A."/>
            <person name="McCullagh B."/>
            <person name="Robben J."/>
            <person name="Grymonprez B."/>
            <person name="Zimmermann W."/>
            <person name="Ramsperger U."/>
            <person name="Wedler H."/>
            <person name="Balke K."/>
            <person name="Wedler E."/>
            <person name="Peters S."/>
            <person name="van Staveren M."/>
            <person name="Dirkse W."/>
            <person name="Mooijman P."/>
            <person name="Klein Lankhorst R."/>
            <person name="Weitzenegger T."/>
            <person name="Bothe G."/>
            <person name="Rose M."/>
            <person name="Hauf J."/>
            <person name="Berneiser S."/>
            <person name="Hempel S."/>
            <person name="Feldpausch M."/>
            <person name="Lamberth S."/>
            <person name="Villarroel R."/>
            <person name="Gielen J."/>
            <person name="Ardiles W."/>
            <person name="Bents O."/>
            <person name="Lemcke K."/>
            <person name="Kolesov G."/>
            <person name="Mayer K.F.X."/>
            <person name="Rudd S."/>
            <person name="Schoof H."/>
            <person name="Schueller C."/>
            <person name="Zaccaria P."/>
            <person name="Mewes H.-W."/>
            <person name="Bevan M."/>
            <person name="Fransz P.F."/>
        </authorList>
    </citation>
    <scope>NUCLEOTIDE SEQUENCE [LARGE SCALE GENOMIC DNA]</scope>
    <source>
        <strain>cv. Columbia</strain>
    </source>
</reference>
<reference key="2">
    <citation type="journal article" date="2017" name="Plant J.">
        <title>Araport11: a complete reannotation of the Arabidopsis thaliana reference genome.</title>
        <authorList>
            <person name="Cheng C.Y."/>
            <person name="Krishnakumar V."/>
            <person name="Chan A.P."/>
            <person name="Thibaud-Nissen F."/>
            <person name="Schobel S."/>
            <person name="Town C.D."/>
        </authorList>
    </citation>
    <scope>GENOME REANNOTATION</scope>
    <source>
        <strain>cv. Columbia</strain>
    </source>
</reference>
<reference key="3">
    <citation type="journal article" date="2002" name="Science">
        <title>Functional annotation of a full-length Arabidopsis cDNA collection.</title>
        <authorList>
            <person name="Seki M."/>
            <person name="Narusaka M."/>
            <person name="Kamiya A."/>
            <person name="Ishida J."/>
            <person name="Satou M."/>
            <person name="Sakurai T."/>
            <person name="Nakajima M."/>
            <person name="Enju A."/>
            <person name="Akiyama K."/>
            <person name="Oono Y."/>
            <person name="Muramatsu M."/>
            <person name="Hayashizaki Y."/>
            <person name="Kawai J."/>
            <person name="Carninci P."/>
            <person name="Itoh M."/>
            <person name="Ishii Y."/>
            <person name="Arakawa T."/>
            <person name="Shibata K."/>
            <person name="Shinagawa A."/>
            <person name="Shinozaki K."/>
        </authorList>
    </citation>
    <scope>NUCLEOTIDE SEQUENCE [LARGE SCALE MRNA] OF 263-483</scope>
    <source>
        <strain>cv. Columbia</strain>
    </source>
</reference>
<reference key="4">
    <citation type="journal article" date="2004" name="Plant Cell">
        <title>Genome-wide analysis of Arabidopsis pentatricopeptide repeat proteins reveals their essential role in organelle biogenesis.</title>
        <authorList>
            <person name="Lurin C."/>
            <person name="Andres C."/>
            <person name="Aubourg S."/>
            <person name="Bellaoui M."/>
            <person name="Bitton F."/>
            <person name="Bruyere C."/>
            <person name="Caboche M."/>
            <person name="Debast C."/>
            <person name="Gualberto J."/>
            <person name="Hoffmann B."/>
            <person name="Lecharny A."/>
            <person name="Le Ret M."/>
            <person name="Martin-Magniette M.-L."/>
            <person name="Mireau H."/>
            <person name="Peeters N."/>
            <person name="Renou J.-P."/>
            <person name="Szurek B."/>
            <person name="Taconnat L."/>
            <person name="Small I."/>
        </authorList>
    </citation>
    <scope>GENE FAMILY</scope>
</reference>
<protein>
    <recommendedName>
        <fullName>Pentatricopeptide repeat-containing protein At5g18950</fullName>
    </recommendedName>
</protein>
<sequence length="483" mass="55000">MSRGQSYLISFFRNRTRKNPNTQIRSLTVESRDCESKPDEQKSAVSYTEMAKTVSTIMRERQRWQQTLVSDFPSFDFADPLFFGELLKSQNNVLFSLWFFRWLCSNYDYTPGPVSLNILFGALLDGKAVKAAKSFLDTTGFKPEPTLLEQYVKCLSEEGLVEEAIEVYNVLKDMGISSSVVTCNSVLLGCLKARKLDRFWELHKEMVESEFDSERIRCLIRALCDGGDVSEGYELLKQGLKQGLDPGQYVYAKLISGFCEIGNYACMSEVLHTMIAWNHFPSMYIYQKIIKGLCMNKKQLEAYCIFKNLKDKGYAPDRVVYTTMIRGFCEKGWLGSARKLWFEMIKKGMRPNEFAYNVMIHGHFKRGEISLVEAFYNEMLRNGYGGTMLSCNTMIKGFCSHGKSDEAFEIFKNMSETGVTPNAITYNALIKGFCKENKVEKGLKLYKELKALGLKPSGMAYAALVRNLKMSDSVATSLNLEIV</sequence>
<organism>
    <name type="scientific">Arabidopsis thaliana</name>
    <name type="common">Mouse-ear cress</name>
    <dbReference type="NCBI Taxonomy" id="3702"/>
    <lineage>
        <taxon>Eukaryota</taxon>
        <taxon>Viridiplantae</taxon>
        <taxon>Streptophyta</taxon>
        <taxon>Embryophyta</taxon>
        <taxon>Tracheophyta</taxon>
        <taxon>Spermatophyta</taxon>
        <taxon>Magnoliopsida</taxon>
        <taxon>eudicotyledons</taxon>
        <taxon>Gunneridae</taxon>
        <taxon>Pentapetalae</taxon>
        <taxon>rosids</taxon>
        <taxon>malvids</taxon>
        <taxon>Brassicales</taxon>
        <taxon>Brassicaceae</taxon>
        <taxon>Camelineae</taxon>
        <taxon>Arabidopsis</taxon>
    </lineage>
</organism>
<comment type="similarity">
    <text evidence="1">Belongs to the PPR family. P subfamily.</text>
</comment>
<comment type="sequence caution" evidence="1">
    <conflict type="erroneous initiation">
        <sequence resource="EMBL-CDS" id="BAC42180"/>
    </conflict>
</comment>
<comment type="online information" name="Pentatricopeptide repeat proteins">
    <link uri="https://ppr.plantenergy.uwa.edu.au"/>
</comment>